<evidence type="ECO:0000255" key="1"/>
<evidence type="ECO:0000255" key="2">
    <source>
        <dbReference type="PROSITE-ProRule" id="PRU00521"/>
    </source>
</evidence>
<evidence type="ECO:0000305" key="3"/>
<reference key="1">
    <citation type="journal article" date="2006" name="Nature">
        <title>The DNA sequence, annotation and analysis of human chromosome 3.</title>
        <authorList>
            <person name="Muzny D.M."/>
            <person name="Scherer S.E."/>
            <person name="Kaul R."/>
            <person name="Wang J."/>
            <person name="Yu J."/>
            <person name="Sudbrak R."/>
            <person name="Buhay C.J."/>
            <person name="Chen R."/>
            <person name="Cree A."/>
            <person name="Ding Y."/>
            <person name="Dugan-Rocha S."/>
            <person name="Gill R."/>
            <person name="Gunaratne P."/>
            <person name="Harris R.A."/>
            <person name="Hawes A.C."/>
            <person name="Hernandez J."/>
            <person name="Hodgson A.V."/>
            <person name="Hume J."/>
            <person name="Jackson A."/>
            <person name="Khan Z.M."/>
            <person name="Kovar-Smith C."/>
            <person name="Lewis L.R."/>
            <person name="Lozado R.J."/>
            <person name="Metzker M.L."/>
            <person name="Milosavljevic A."/>
            <person name="Miner G.R."/>
            <person name="Morgan M.B."/>
            <person name="Nazareth L.V."/>
            <person name="Scott G."/>
            <person name="Sodergren E."/>
            <person name="Song X.-Z."/>
            <person name="Steffen D."/>
            <person name="Wei S."/>
            <person name="Wheeler D.A."/>
            <person name="Wright M.W."/>
            <person name="Worley K.C."/>
            <person name="Yuan Y."/>
            <person name="Zhang Z."/>
            <person name="Adams C.Q."/>
            <person name="Ansari-Lari M.A."/>
            <person name="Ayele M."/>
            <person name="Brown M.J."/>
            <person name="Chen G."/>
            <person name="Chen Z."/>
            <person name="Clendenning J."/>
            <person name="Clerc-Blankenburg K.P."/>
            <person name="Chen R."/>
            <person name="Chen Z."/>
            <person name="Davis C."/>
            <person name="Delgado O."/>
            <person name="Dinh H.H."/>
            <person name="Dong W."/>
            <person name="Draper H."/>
            <person name="Ernst S."/>
            <person name="Fu G."/>
            <person name="Gonzalez-Garay M.L."/>
            <person name="Garcia D.K."/>
            <person name="Gillett W."/>
            <person name="Gu J."/>
            <person name="Hao B."/>
            <person name="Haugen E."/>
            <person name="Havlak P."/>
            <person name="He X."/>
            <person name="Hennig S."/>
            <person name="Hu S."/>
            <person name="Huang W."/>
            <person name="Jackson L.R."/>
            <person name="Jacob L.S."/>
            <person name="Kelly S.H."/>
            <person name="Kube M."/>
            <person name="Levy R."/>
            <person name="Li Z."/>
            <person name="Liu B."/>
            <person name="Liu J."/>
            <person name="Liu W."/>
            <person name="Lu J."/>
            <person name="Maheshwari M."/>
            <person name="Nguyen B.-V."/>
            <person name="Okwuonu G.O."/>
            <person name="Palmeiri A."/>
            <person name="Pasternak S."/>
            <person name="Perez L.M."/>
            <person name="Phelps K.A."/>
            <person name="Plopper F.J."/>
            <person name="Qiang B."/>
            <person name="Raymond C."/>
            <person name="Rodriguez R."/>
            <person name="Saenphimmachak C."/>
            <person name="Santibanez J."/>
            <person name="Shen H."/>
            <person name="Shen Y."/>
            <person name="Subramanian S."/>
            <person name="Tabor P.E."/>
            <person name="Verduzco D."/>
            <person name="Waldron L."/>
            <person name="Wang J."/>
            <person name="Wang J."/>
            <person name="Wang Q."/>
            <person name="Williams G.A."/>
            <person name="Wong G.K.-S."/>
            <person name="Yao Z."/>
            <person name="Zhang J."/>
            <person name="Zhang X."/>
            <person name="Zhao G."/>
            <person name="Zhou J."/>
            <person name="Zhou Y."/>
            <person name="Nelson D."/>
            <person name="Lehrach H."/>
            <person name="Reinhardt R."/>
            <person name="Naylor S.L."/>
            <person name="Yang H."/>
            <person name="Olson M."/>
            <person name="Weinstock G."/>
            <person name="Gibbs R.A."/>
        </authorList>
    </citation>
    <scope>NUCLEOTIDE SEQUENCE [LARGE SCALE GENOMIC DNA]</scope>
</reference>
<proteinExistence type="inferred from homology"/>
<comment type="function">
    <text evidence="3">Odorant receptor.</text>
</comment>
<comment type="subcellular location">
    <subcellularLocation>
        <location>Cell membrane</location>
        <topology>Multi-pass membrane protein</topology>
    </subcellularLocation>
</comment>
<comment type="similarity">
    <text evidence="2">Belongs to the G-protein coupled receptor 1 family.</text>
</comment>
<comment type="online information" name="Human Olfactory Receptor Data Exploratorium (HORDE)">
    <link uri="http://genome.weizmann.ac.il/horde/card/index/symbol:OR5K3"/>
</comment>
<organism>
    <name type="scientific">Homo sapiens</name>
    <name type="common">Human</name>
    <dbReference type="NCBI Taxonomy" id="9606"/>
    <lineage>
        <taxon>Eukaryota</taxon>
        <taxon>Metazoa</taxon>
        <taxon>Chordata</taxon>
        <taxon>Craniata</taxon>
        <taxon>Vertebrata</taxon>
        <taxon>Euteleostomi</taxon>
        <taxon>Mammalia</taxon>
        <taxon>Eutheria</taxon>
        <taxon>Euarchontoglires</taxon>
        <taxon>Primates</taxon>
        <taxon>Haplorrhini</taxon>
        <taxon>Catarrhini</taxon>
        <taxon>Hominidae</taxon>
        <taxon>Homo</taxon>
    </lineage>
</organism>
<keyword id="KW-1003">Cell membrane</keyword>
<keyword id="KW-1015">Disulfide bond</keyword>
<keyword id="KW-0297">G-protein coupled receptor</keyword>
<keyword id="KW-0325">Glycoprotein</keyword>
<keyword id="KW-0472">Membrane</keyword>
<keyword id="KW-0552">Olfaction</keyword>
<keyword id="KW-0675">Receptor</keyword>
<keyword id="KW-1185">Reference proteome</keyword>
<keyword id="KW-0716">Sensory transduction</keyword>
<keyword id="KW-0807">Transducer</keyword>
<keyword id="KW-0812">Transmembrane</keyword>
<keyword id="KW-1133">Transmembrane helix</keyword>
<accession>A6NET4</accession>
<gene>
    <name type="primary">OR5K3</name>
</gene>
<sequence>MNKENHSLIAEFILTGFTYHPKLKTVLFVVFFAIYLITMVGNIGLVALIYIEQRLHTPMYIFLGNLVLMDSCCSSAITPKMLENFFSEDKRITLYECMAQFYFLCLAETTDCFLLAAMAYDCYVAICNPLQYHTMMSKTLCIQMTAGAYLAGNLHPMIEVEFLLRLTFCGSHQINHFFCDVLPLYRLSCINPYINELVLFILAGSIQIFTIVLVSYFYILFTIFTMKSKEGRGKALSTCASHFLSVSIFCDSLLFMYARPGAVNEGDKDIPVAIFYTLVIPLLNPFIYSLRNKEVINIMKKIMKKRKFCHILKQMSSPLAT</sequence>
<dbReference type="EMBL" id="AC108730">
    <property type="status" value="NOT_ANNOTATED_CDS"/>
    <property type="molecule type" value="Genomic_DNA"/>
</dbReference>
<dbReference type="CCDS" id="CCDS33803.1"/>
<dbReference type="RefSeq" id="NP_001005516.1">
    <property type="nucleotide sequence ID" value="NM_001005516.1"/>
</dbReference>
<dbReference type="SMR" id="A6NET4"/>
<dbReference type="FunCoup" id="A6NET4">
    <property type="interactions" value="416"/>
</dbReference>
<dbReference type="STRING" id="9606.ENSP00000373194"/>
<dbReference type="GlyCosmos" id="A6NET4">
    <property type="glycosylation" value="1 site, No reported glycans"/>
</dbReference>
<dbReference type="GlyGen" id="A6NET4">
    <property type="glycosylation" value="1 site"/>
</dbReference>
<dbReference type="BioMuta" id="OR5K3"/>
<dbReference type="MassIVE" id="A6NET4"/>
<dbReference type="PaxDb" id="9606-ENSP00000373194"/>
<dbReference type="PeptideAtlas" id="A6NET4"/>
<dbReference type="Antibodypedia" id="58701">
    <property type="antibodies" value="41 antibodies from 14 providers"/>
</dbReference>
<dbReference type="DNASU" id="403277"/>
<dbReference type="Ensembl" id="ENST00000383695.1">
    <property type="protein sequence ID" value="ENSP00000373194.1"/>
    <property type="gene ID" value="ENSG00000206536.1"/>
</dbReference>
<dbReference type="GeneID" id="403277"/>
<dbReference type="KEGG" id="hsa:403277"/>
<dbReference type="MANE-Select" id="ENST00000383695.1">
    <property type="protein sequence ID" value="ENSP00000373194.1"/>
    <property type="RefSeq nucleotide sequence ID" value="NM_001005516.1"/>
    <property type="RefSeq protein sequence ID" value="NP_001005516.1"/>
</dbReference>
<dbReference type="UCSC" id="uc011bgw.2">
    <property type="organism name" value="human"/>
</dbReference>
<dbReference type="AGR" id="HGNC:31290"/>
<dbReference type="CTD" id="403277"/>
<dbReference type="DisGeNET" id="403277"/>
<dbReference type="GeneCards" id="OR5K3"/>
<dbReference type="HGNC" id="HGNC:31290">
    <property type="gene designation" value="OR5K3"/>
</dbReference>
<dbReference type="HPA" id="ENSG00000206536">
    <property type="expression patterns" value="Not detected"/>
</dbReference>
<dbReference type="neXtProt" id="NX_A6NET4"/>
<dbReference type="PharmGKB" id="PA134984948"/>
<dbReference type="VEuPathDB" id="HostDB:ENSG00000206536"/>
<dbReference type="eggNOG" id="KOG3656">
    <property type="taxonomic scope" value="Eukaryota"/>
</dbReference>
<dbReference type="GeneTree" id="ENSGT01120000271834"/>
<dbReference type="HOGENOM" id="CLU_012526_5_5_1"/>
<dbReference type="InParanoid" id="A6NET4"/>
<dbReference type="OMA" id="TYHPKLK"/>
<dbReference type="OrthoDB" id="9444602at2759"/>
<dbReference type="PAN-GO" id="A6NET4">
    <property type="GO annotations" value="2 GO annotations based on evolutionary models"/>
</dbReference>
<dbReference type="PhylomeDB" id="A6NET4"/>
<dbReference type="TreeFam" id="TF352737"/>
<dbReference type="PathwayCommons" id="A6NET4"/>
<dbReference type="Reactome" id="R-HSA-9752946">
    <property type="pathway name" value="Expression and translocation of olfactory receptors"/>
</dbReference>
<dbReference type="BioGRID-ORCS" id="403277">
    <property type="hits" value="11 hits in 709 CRISPR screens"/>
</dbReference>
<dbReference type="GenomeRNAi" id="403277"/>
<dbReference type="Pharos" id="A6NET4">
    <property type="development level" value="Tdark"/>
</dbReference>
<dbReference type="PRO" id="PR:A6NET4"/>
<dbReference type="Proteomes" id="UP000005640">
    <property type="component" value="Chromosome 3"/>
</dbReference>
<dbReference type="RNAct" id="A6NET4">
    <property type="molecule type" value="protein"/>
</dbReference>
<dbReference type="Bgee" id="ENSG00000206536">
    <property type="expression patterns" value="Expressed in male germ line stem cell (sensu Vertebrata) in testis and 1 other cell type or tissue"/>
</dbReference>
<dbReference type="GO" id="GO:0005886">
    <property type="term" value="C:plasma membrane"/>
    <property type="evidence" value="ECO:0007669"/>
    <property type="project" value="UniProtKB-SubCell"/>
</dbReference>
<dbReference type="GO" id="GO:0004930">
    <property type="term" value="F:G protein-coupled receptor activity"/>
    <property type="evidence" value="ECO:0007669"/>
    <property type="project" value="UniProtKB-KW"/>
</dbReference>
<dbReference type="GO" id="GO:0005549">
    <property type="term" value="F:odorant binding"/>
    <property type="evidence" value="ECO:0000318"/>
    <property type="project" value="GO_Central"/>
</dbReference>
<dbReference type="GO" id="GO:0004984">
    <property type="term" value="F:olfactory receptor activity"/>
    <property type="evidence" value="ECO:0000318"/>
    <property type="project" value="GO_Central"/>
</dbReference>
<dbReference type="FunFam" id="1.20.1070.10:FF:000004">
    <property type="entry name" value="Olfactory receptor"/>
    <property type="match status" value="1"/>
</dbReference>
<dbReference type="Gene3D" id="1.20.1070.10">
    <property type="entry name" value="Rhodopsin 7-helix transmembrane proteins"/>
    <property type="match status" value="1"/>
</dbReference>
<dbReference type="InterPro" id="IPR000276">
    <property type="entry name" value="GPCR_Rhodpsn"/>
</dbReference>
<dbReference type="InterPro" id="IPR017452">
    <property type="entry name" value="GPCR_Rhodpsn_7TM"/>
</dbReference>
<dbReference type="InterPro" id="IPR000725">
    <property type="entry name" value="Olfact_rcpt"/>
</dbReference>
<dbReference type="PANTHER" id="PTHR48018">
    <property type="entry name" value="OLFACTORY RECEPTOR"/>
    <property type="match status" value="1"/>
</dbReference>
<dbReference type="Pfam" id="PF13853">
    <property type="entry name" value="7tm_4"/>
    <property type="match status" value="1"/>
</dbReference>
<dbReference type="PRINTS" id="PR00237">
    <property type="entry name" value="GPCRRHODOPSN"/>
</dbReference>
<dbReference type="PRINTS" id="PR00245">
    <property type="entry name" value="OLFACTORYR"/>
</dbReference>
<dbReference type="SUPFAM" id="SSF81321">
    <property type="entry name" value="Family A G protein-coupled receptor-like"/>
    <property type="match status" value="1"/>
</dbReference>
<dbReference type="PROSITE" id="PS50262">
    <property type="entry name" value="G_PROTEIN_RECEP_F1_2"/>
    <property type="match status" value="1"/>
</dbReference>
<protein>
    <recommendedName>
        <fullName>Olfactory receptor 5K3</fullName>
    </recommendedName>
</protein>
<feature type="chain" id="PRO_0000310455" description="Olfactory receptor 5K3">
    <location>
        <begin position="1"/>
        <end position="321"/>
    </location>
</feature>
<feature type="topological domain" description="Extracellular" evidence="1">
    <location>
        <begin position="1"/>
        <end position="25"/>
    </location>
</feature>
<feature type="transmembrane region" description="Helical; Name=1" evidence="1">
    <location>
        <begin position="26"/>
        <end position="46"/>
    </location>
</feature>
<feature type="topological domain" description="Cytoplasmic" evidence="1">
    <location>
        <begin position="47"/>
        <end position="56"/>
    </location>
</feature>
<feature type="transmembrane region" description="Helical; Name=2" evidence="1">
    <location>
        <begin position="57"/>
        <end position="77"/>
    </location>
</feature>
<feature type="topological domain" description="Extracellular" evidence="1">
    <location>
        <begin position="78"/>
        <end position="97"/>
    </location>
</feature>
<feature type="transmembrane region" description="Helical; Name=3" evidence="1">
    <location>
        <begin position="98"/>
        <end position="118"/>
    </location>
</feature>
<feature type="topological domain" description="Cytoplasmic" evidence="1">
    <location>
        <begin position="119"/>
        <end position="143"/>
    </location>
</feature>
<feature type="transmembrane region" description="Helical; Name=4" evidence="1">
    <location>
        <begin position="144"/>
        <end position="164"/>
    </location>
</feature>
<feature type="topological domain" description="Extracellular" evidence="1">
    <location>
        <begin position="165"/>
        <end position="196"/>
    </location>
</feature>
<feature type="transmembrane region" description="Helical; Name=5" evidence="1">
    <location>
        <begin position="197"/>
        <end position="217"/>
    </location>
</feature>
<feature type="topological domain" description="Cytoplasmic" evidence="1">
    <location>
        <begin position="218"/>
        <end position="235"/>
    </location>
</feature>
<feature type="transmembrane region" description="Helical; Name=6" evidence="1">
    <location>
        <begin position="236"/>
        <end position="256"/>
    </location>
</feature>
<feature type="topological domain" description="Extracellular" evidence="1">
    <location>
        <begin position="257"/>
        <end position="269"/>
    </location>
</feature>
<feature type="transmembrane region" description="Helical; Name=7" evidence="1">
    <location>
        <begin position="270"/>
        <end position="290"/>
    </location>
</feature>
<feature type="topological domain" description="Cytoplasmic" evidence="1">
    <location>
        <begin position="291"/>
        <end position="321"/>
    </location>
</feature>
<feature type="glycosylation site" description="N-linked (GlcNAc...) asparagine" evidence="1">
    <location>
        <position position="5"/>
    </location>
</feature>
<feature type="disulfide bond" evidence="2">
    <location>
        <begin position="97"/>
        <end position="179"/>
    </location>
</feature>
<feature type="sequence variant" id="VAR_037044" description="In dbSNP:rs13068323.">
    <original>G</original>
    <variation>D</variation>
    <location>
        <position position="44"/>
    </location>
</feature>
<name>OR5K3_HUMAN</name>